<reference key="1">
    <citation type="journal article" date="1997" name="J. Bacteriol.">
        <title>Complete genome sequence of Methanobacterium thermoautotrophicum deltaH: functional analysis and comparative genomics.</title>
        <authorList>
            <person name="Smith D.R."/>
            <person name="Doucette-Stamm L.A."/>
            <person name="Deloughery C."/>
            <person name="Lee H.-M."/>
            <person name="Dubois J."/>
            <person name="Aldredge T."/>
            <person name="Bashirzadeh R."/>
            <person name="Blakely D."/>
            <person name="Cook R."/>
            <person name="Gilbert K."/>
            <person name="Harrison D."/>
            <person name="Hoang L."/>
            <person name="Keagle P."/>
            <person name="Lumm W."/>
            <person name="Pothier B."/>
            <person name="Qiu D."/>
            <person name="Spadafora R."/>
            <person name="Vicare R."/>
            <person name="Wang Y."/>
            <person name="Wierzbowski J."/>
            <person name="Gibson R."/>
            <person name="Jiwani N."/>
            <person name="Caruso A."/>
            <person name="Bush D."/>
            <person name="Safer H."/>
            <person name="Patwell D."/>
            <person name="Prabhakar S."/>
            <person name="McDougall S."/>
            <person name="Shimer G."/>
            <person name="Goyal A."/>
            <person name="Pietrovski S."/>
            <person name="Church G.M."/>
            <person name="Daniels C.J."/>
            <person name="Mao J.-I."/>
            <person name="Rice P."/>
            <person name="Noelling J."/>
            <person name="Reeve J.N."/>
        </authorList>
    </citation>
    <scope>NUCLEOTIDE SEQUENCE [LARGE SCALE GENOMIC DNA]</scope>
    <source>
        <strain>ATCC 29096 / DSM 1053 / JCM 10044 / NBRC 100330 / Delta H</strain>
    </source>
</reference>
<gene>
    <name type="primary">hdrA</name>
    <name type="ordered locus">MTH_1381</name>
</gene>
<comment type="function">
    <text evidence="1">Part of a complex that catalyzes the reversible reduction of CoM-S-S-CoB to the thiol-coenzymes H-S-CoM (coenzyme M) and H-S-CoB (coenzyme B).</text>
</comment>
<comment type="catalytic activity">
    <reaction evidence="1">
        <text>coenzyme B + coenzyme M + 2 reduced [2Fe-2S]-[ferredoxin] + 2 H(+) = coenzyme M-coenzyme B heterodisulfide + 2 H2 + 2 oxidized [2Fe-2S]-[ferredoxin]</text>
        <dbReference type="Rhea" id="RHEA:55748"/>
        <dbReference type="Rhea" id="RHEA-COMP:10000"/>
        <dbReference type="Rhea" id="RHEA-COMP:10001"/>
        <dbReference type="ChEBI" id="CHEBI:15378"/>
        <dbReference type="ChEBI" id="CHEBI:18276"/>
        <dbReference type="ChEBI" id="CHEBI:33737"/>
        <dbReference type="ChEBI" id="CHEBI:33738"/>
        <dbReference type="ChEBI" id="CHEBI:58319"/>
        <dbReference type="ChEBI" id="CHEBI:58411"/>
        <dbReference type="ChEBI" id="CHEBI:58596"/>
        <dbReference type="EC" id="1.8.98.5"/>
    </reaction>
</comment>
<comment type="cofactor">
    <cofactor evidence="3">
        <name>[4Fe-4S] cluster</name>
        <dbReference type="ChEBI" id="CHEBI:49883"/>
    </cofactor>
    <text evidence="3">Binds 4 [4Fe-4S] clusters per subunit.</text>
</comment>
<comment type="cofactor">
    <cofactor evidence="1">
        <name>FAD</name>
        <dbReference type="ChEBI" id="CHEBI:57692"/>
    </cofactor>
</comment>
<comment type="pathway">
    <text evidence="1">Cofactor metabolism; coenzyme M-coenzyme B heterodisulfide reduction; coenzyme B and coenzyme M from coenzyme M-coenzyme B heterodisulfide: step 1/1.</text>
</comment>
<comment type="subunit">
    <text evidence="1">The heterodisulfide reductase is composed of three subunits; HdrA, HdrB and HdrC. It forms a complex with the F420-non-reducing hydrogenase (Mvh), which provides the reducing equivalents to the heterodisulfide reductase.</text>
</comment>
<comment type="similarity">
    <text evidence="4">Belongs to the HdrA family.</text>
</comment>
<comment type="sequence caution" evidence="4">
    <conflict type="erroneous initiation">
        <sequence resource="EMBL-CDS" id="AAB85858"/>
    </conflict>
</comment>
<accession>O27434</accession>
<protein>
    <recommendedName>
        <fullName evidence="1">H(2):CoB-CoM heterodisulfide,ferredoxin reductase subunit A</fullName>
        <ecNumber evidence="1">1.8.98.5</ecNumber>
    </recommendedName>
    <alternativeName>
        <fullName evidence="1">CoB--CoM heterodisulfide reductase iron-sulfur subunit A</fullName>
    </alternativeName>
</protein>
<dbReference type="EC" id="1.8.98.5" evidence="1"/>
<dbReference type="EMBL" id="AE000666">
    <property type="protein sequence ID" value="AAB85858.1"/>
    <property type="status" value="ALT_INIT"/>
    <property type="molecule type" value="Genomic_DNA"/>
</dbReference>
<dbReference type="PIR" id="G69050">
    <property type="entry name" value="G69050"/>
</dbReference>
<dbReference type="RefSeq" id="WP_048061038.1">
    <property type="nucleotide sequence ID" value="NC_000916.1"/>
</dbReference>
<dbReference type="SMR" id="O27434"/>
<dbReference type="FunCoup" id="O27434">
    <property type="interactions" value="3"/>
</dbReference>
<dbReference type="IntAct" id="O27434">
    <property type="interactions" value="2"/>
</dbReference>
<dbReference type="STRING" id="187420.MTH_1381"/>
<dbReference type="PaxDb" id="187420-MTH_1381"/>
<dbReference type="EnsemblBacteria" id="AAB85858">
    <property type="protein sequence ID" value="AAB85858"/>
    <property type="gene ID" value="MTH_1381"/>
</dbReference>
<dbReference type="GeneID" id="82297819"/>
<dbReference type="KEGG" id="mth:MTH_1381"/>
<dbReference type="PATRIC" id="fig|187420.15.peg.1346"/>
<dbReference type="HOGENOM" id="CLU_020302_0_0_2"/>
<dbReference type="InParanoid" id="O27434"/>
<dbReference type="BioCyc" id="MetaCyc:HDRAMAUTO-MONOMER"/>
<dbReference type="UniPathway" id="UPA00647">
    <property type="reaction ID" value="UER00700"/>
</dbReference>
<dbReference type="Proteomes" id="UP000005223">
    <property type="component" value="Chromosome"/>
</dbReference>
<dbReference type="GO" id="GO:0051539">
    <property type="term" value="F:4 iron, 4 sulfur cluster binding"/>
    <property type="evidence" value="ECO:0007669"/>
    <property type="project" value="UniProtKB-KW"/>
</dbReference>
<dbReference type="GO" id="GO:0046872">
    <property type="term" value="F:metal ion binding"/>
    <property type="evidence" value="ECO:0007669"/>
    <property type="project" value="UniProtKB-KW"/>
</dbReference>
<dbReference type="GO" id="GO:0016491">
    <property type="term" value="F:oxidoreductase activity"/>
    <property type="evidence" value="ECO:0007669"/>
    <property type="project" value="UniProtKB-KW"/>
</dbReference>
<dbReference type="GO" id="GO:0015948">
    <property type="term" value="P:methanogenesis"/>
    <property type="evidence" value="ECO:0007669"/>
    <property type="project" value="UniProtKB-KW"/>
</dbReference>
<dbReference type="FunFam" id="3.30.70.20:FF:000073">
    <property type="entry name" value="H(2):CoB-CoM heterodisulfide,ferredoxin reductase subunit A"/>
    <property type="match status" value="1"/>
</dbReference>
<dbReference type="FunFam" id="3.50.50.60:FF:000644">
    <property type="entry name" value="H(2):CoB-CoM heterodisulfide,ferredoxin reductase subunit A"/>
    <property type="match status" value="1"/>
</dbReference>
<dbReference type="Gene3D" id="3.30.70.20">
    <property type="match status" value="2"/>
</dbReference>
<dbReference type="Gene3D" id="3.50.50.60">
    <property type="entry name" value="FAD/NAD(P)-binding domain"/>
    <property type="match status" value="1"/>
</dbReference>
<dbReference type="InterPro" id="IPR017896">
    <property type="entry name" value="4Fe4S_Fe-S-bd"/>
</dbReference>
<dbReference type="InterPro" id="IPR017900">
    <property type="entry name" value="4Fe4S_Fe_S_CS"/>
</dbReference>
<dbReference type="InterPro" id="IPR036188">
    <property type="entry name" value="FAD/NAD-bd_sf"/>
</dbReference>
<dbReference type="InterPro" id="IPR039650">
    <property type="entry name" value="HdrA-like"/>
</dbReference>
<dbReference type="PANTHER" id="PTHR43498:SF1">
    <property type="entry name" value="COB--COM HETERODISULFIDE REDUCTASE IRON-SULFUR SUBUNIT A"/>
    <property type="match status" value="1"/>
</dbReference>
<dbReference type="PANTHER" id="PTHR43498">
    <property type="entry name" value="FERREDOXIN:COB-COM HETERODISULFIDE REDUCTASE SUBUNIT A"/>
    <property type="match status" value="1"/>
</dbReference>
<dbReference type="Pfam" id="PF00037">
    <property type="entry name" value="Fer4"/>
    <property type="match status" value="1"/>
</dbReference>
<dbReference type="Pfam" id="PF13237">
    <property type="entry name" value="Fer4_10"/>
    <property type="match status" value="1"/>
</dbReference>
<dbReference type="SUPFAM" id="SSF54862">
    <property type="entry name" value="4Fe-4S ferredoxins"/>
    <property type="match status" value="1"/>
</dbReference>
<dbReference type="SUPFAM" id="SSF51905">
    <property type="entry name" value="FAD/NAD(P)-binding domain"/>
    <property type="match status" value="1"/>
</dbReference>
<dbReference type="PROSITE" id="PS00198">
    <property type="entry name" value="4FE4S_FER_1"/>
    <property type="match status" value="4"/>
</dbReference>
<dbReference type="PROSITE" id="PS51379">
    <property type="entry name" value="4FE4S_FER_2"/>
    <property type="match status" value="4"/>
</dbReference>
<sequence>MAEEKKEETMEEPRIGVYVCHCGVNIGGVVDIEAVRDYAAKLPNVVVSKDYKYYCSDPGQLEIQKDIKELGLNRVVVAACSPRLHEPTFRRCVEEAGLNQFLFEFANLREQDSWVHMDDPEGATEKAKDLVRMAVAKARLLEPLEASKVSVDDKALVIGGGVAGIQTALDLADMGFKTYMVEKRPSISGRMGQLDKTFPTLDCSMCILAPKMVDVGKHDNIELITYAEVKEVDGYIGNFKVKIEKKPRYIDEDLCTGCGSCVEVCPIEMPNYFDEGIGMTKAVYIPFPQAVPLCATIDKDYCIECMLCDEICERGAVKHDQEPEEIEIEVGTIIVATGYDAYDPTEKLEYGYGRHTNVITGLELERMINASGPTDGKVIKPSDGEKPKRVAFIHCVGSRDEQIGKPYCSRVCCMYIMKNAQLIKDKMPDTEVTLYYMDIRAFGKGFEEFYKRSQEKYGIKFIRGRPAEILENPDLTLTVRSEDTLLGKVTEYDYDMVVLGVGLVPPEGSEKLRQTIGLSKSADGFLMEAHPKLRPVDTLTDGVYLAGVAQGPKDIPDAVAQASGAAARAAIPMVKGEVEIEPIVAVTDSDVCGGCEVCIELCPFGAISIEEGHANVNVALCKGCGTCVAACPSGAMDQQHFRTEQIMAQIEAALNEQAK</sequence>
<proteinExistence type="inferred from homology"/>
<keyword id="KW-0004">4Fe-4S</keyword>
<keyword id="KW-0274">FAD</keyword>
<keyword id="KW-0285">Flavoprotein</keyword>
<keyword id="KW-0408">Iron</keyword>
<keyword id="KW-0411">Iron-sulfur</keyword>
<keyword id="KW-0479">Metal-binding</keyword>
<keyword id="KW-0484">Methanogenesis</keyword>
<keyword id="KW-0560">Oxidoreductase</keyword>
<keyword id="KW-1185">Reference proteome</keyword>
<keyword id="KW-0677">Repeat</keyword>
<feature type="chain" id="PRO_0000150061" description="H(2):CoB-CoM heterodisulfide,ferredoxin reductase subunit A">
    <location>
        <begin position="1"/>
        <end position="659"/>
    </location>
</feature>
<feature type="domain" description="4Fe-4S ferredoxin-type 1" evidence="3">
    <location>
        <begin position="245"/>
        <end position="275"/>
    </location>
</feature>
<feature type="domain" description="4Fe-4S ferredoxin-type 2" evidence="3">
    <location>
        <begin position="293"/>
        <end position="322"/>
    </location>
</feature>
<feature type="domain" description="4Fe-4S ferredoxin-type 3" evidence="3">
    <location>
        <begin position="582"/>
        <end position="611"/>
    </location>
</feature>
<feature type="domain" description="4Fe-4S ferredoxin-type 4" evidence="3">
    <location>
        <begin position="612"/>
        <end position="641"/>
    </location>
</feature>
<feature type="binding site" evidence="2">
    <location>
        <begin position="159"/>
        <end position="182"/>
    </location>
    <ligand>
        <name>FAD</name>
        <dbReference type="ChEBI" id="CHEBI:57692"/>
    </ligand>
</feature>
<feature type="binding site" evidence="3">
    <location>
        <position position="255"/>
    </location>
    <ligand>
        <name>[4Fe-4S] cluster</name>
        <dbReference type="ChEBI" id="CHEBI:49883"/>
        <label>1</label>
    </ligand>
</feature>
<feature type="binding site" evidence="3">
    <location>
        <position position="258"/>
    </location>
    <ligand>
        <name>[4Fe-4S] cluster</name>
        <dbReference type="ChEBI" id="CHEBI:49883"/>
        <label>1</label>
    </ligand>
</feature>
<feature type="binding site" evidence="3">
    <location>
        <position position="261"/>
    </location>
    <ligand>
        <name>[4Fe-4S] cluster</name>
        <dbReference type="ChEBI" id="CHEBI:49883"/>
        <label>1</label>
    </ligand>
</feature>
<feature type="binding site" evidence="3">
    <location>
        <position position="265"/>
    </location>
    <ligand>
        <name>[4Fe-4S] cluster</name>
        <dbReference type="ChEBI" id="CHEBI:49883"/>
        <label>2</label>
    </ligand>
</feature>
<feature type="binding site" evidence="3">
    <location>
        <position position="302"/>
    </location>
    <ligand>
        <name>[4Fe-4S] cluster</name>
        <dbReference type="ChEBI" id="CHEBI:49883"/>
        <label>2</label>
    </ligand>
</feature>
<feature type="binding site" evidence="3">
    <location>
        <position position="305"/>
    </location>
    <ligand>
        <name>[4Fe-4S] cluster</name>
        <dbReference type="ChEBI" id="CHEBI:49883"/>
        <label>2</label>
    </ligand>
</feature>
<feature type="binding site" evidence="3">
    <location>
        <position position="308"/>
    </location>
    <ligand>
        <name>[4Fe-4S] cluster</name>
        <dbReference type="ChEBI" id="CHEBI:49883"/>
        <label>2</label>
    </ligand>
</feature>
<feature type="binding site" evidence="3">
    <location>
        <position position="312"/>
    </location>
    <ligand>
        <name>[4Fe-4S] cluster</name>
        <dbReference type="ChEBI" id="CHEBI:49883"/>
        <label>1</label>
    </ligand>
</feature>
<feature type="binding site" evidence="3">
    <location>
        <position position="592"/>
    </location>
    <ligand>
        <name>[4Fe-4S] cluster</name>
        <dbReference type="ChEBI" id="CHEBI:49883"/>
        <label>3</label>
    </ligand>
</feature>
<feature type="binding site" evidence="3">
    <location>
        <position position="595"/>
    </location>
    <ligand>
        <name>[4Fe-4S] cluster</name>
        <dbReference type="ChEBI" id="CHEBI:49883"/>
        <label>3</label>
    </ligand>
</feature>
<feature type="binding site" evidence="3">
    <location>
        <position position="598"/>
    </location>
    <ligand>
        <name>[4Fe-4S] cluster</name>
        <dbReference type="ChEBI" id="CHEBI:49883"/>
        <label>3</label>
    </ligand>
</feature>
<feature type="binding site" evidence="3">
    <location>
        <position position="602"/>
    </location>
    <ligand>
        <name>[4Fe-4S] cluster</name>
        <dbReference type="ChEBI" id="CHEBI:49883"/>
        <label>4</label>
    </ligand>
</feature>
<feature type="binding site" evidence="3">
    <location>
        <position position="621"/>
    </location>
    <ligand>
        <name>[4Fe-4S] cluster</name>
        <dbReference type="ChEBI" id="CHEBI:49883"/>
        <label>4</label>
    </ligand>
</feature>
<feature type="binding site" evidence="3">
    <location>
        <position position="624"/>
    </location>
    <ligand>
        <name>[4Fe-4S] cluster</name>
        <dbReference type="ChEBI" id="CHEBI:49883"/>
        <label>4</label>
    </ligand>
</feature>
<feature type="binding site" evidence="3">
    <location>
        <position position="627"/>
    </location>
    <ligand>
        <name>[4Fe-4S] cluster</name>
        <dbReference type="ChEBI" id="CHEBI:49883"/>
        <label>4</label>
    </ligand>
</feature>
<feature type="binding site" evidence="3">
    <location>
        <position position="631"/>
    </location>
    <ligand>
        <name>[4Fe-4S] cluster</name>
        <dbReference type="ChEBI" id="CHEBI:49883"/>
        <label>3</label>
    </ligand>
</feature>
<evidence type="ECO:0000250" key="1">
    <source>
        <dbReference type="UniProtKB" id="Q50756"/>
    </source>
</evidence>
<evidence type="ECO:0000255" key="2"/>
<evidence type="ECO:0000255" key="3">
    <source>
        <dbReference type="PROSITE-ProRule" id="PRU00711"/>
    </source>
</evidence>
<evidence type="ECO:0000305" key="4"/>
<organism>
    <name type="scientific">Methanothermobacter thermautotrophicus (strain ATCC 29096 / DSM 1053 / JCM 10044 / NBRC 100330 / Delta H)</name>
    <name type="common">Methanobacterium thermoautotrophicum</name>
    <dbReference type="NCBI Taxonomy" id="187420"/>
    <lineage>
        <taxon>Archaea</taxon>
        <taxon>Methanobacteriati</taxon>
        <taxon>Methanobacteriota</taxon>
        <taxon>Methanomada group</taxon>
        <taxon>Methanobacteria</taxon>
        <taxon>Methanobacteriales</taxon>
        <taxon>Methanobacteriaceae</taxon>
        <taxon>Methanothermobacter</taxon>
    </lineage>
</organism>
<name>HDRA_METTH</name>